<keyword id="KW-0067">ATP-binding</keyword>
<keyword id="KW-0418">Kinase</keyword>
<keyword id="KW-0547">Nucleotide-binding</keyword>
<keyword id="KW-1185">Reference proteome</keyword>
<keyword id="KW-0723">Serine/threonine-protein kinase</keyword>
<keyword id="KW-0808">Transferase</keyword>
<name>KAPC_ENCCU</name>
<proteinExistence type="inferred from homology"/>
<protein>
    <recommendedName>
        <fullName>Probable cAMP-dependent protein kinase catalytic subunit</fullName>
        <ecNumber>2.7.11.11</ecNumber>
    </recommendedName>
</protein>
<sequence>MLKIQDFEFVKVVGVGAFGKVHLVRLKSSPTSVFAMKMLDFGEILRQRLADQLENEISILKRIYGCPFVAKLYSTDFHGGKVGLIMEYVGGGELFYWLKKCGRFDEQMARFYAAEIISALRFIHGRGILYRDLKPENILITSTGHIKLIDFGFSVYESENIYMISGTPEYMSPEKLRSEDDGRASDYWGLGVMIYEMLCGDPPFYDSSADAIYHKILESNVVFPHYVSPVARCLITGLLDKNRATRLGTKGICEIMGHPFFKGIDWHEVESRRIEPPFIPNPNTVLSSLASSGELKGTDDAETVVLKPYKHIKHLYKVSKGL</sequence>
<comment type="catalytic activity">
    <reaction>
        <text>L-seryl-[protein] + ATP = O-phospho-L-seryl-[protein] + ADP + H(+)</text>
        <dbReference type="Rhea" id="RHEA:17989"/>
        <dbReference type="Rhea" id="RHEA-COMP:9863"/>
        <dbReference type="Rhea" id="RHEA-COMP:11604"/>
        <dbReference type="ChEBI" id="CHEBI:15378"/>
        <dbReference type="ChEBI" id="CHEBI:29999"/>
        <dbReference type="ChEBI" id="CHEBI:30616"/>
        <dbReference type="ChEBI" id="CHEBI:83421"/>
        <dbReference type="ChEBI" id="CHEBI:456216"/>
        <dbReference type="EC" id="2.7.11.11"/>
    </reaction>
</comment>
<comment type="catalytic activity">
    <reaction>
        <text>L-threonyl-[protein] + ATP = O-phospho-L-threonyl-[protein] + ADP + H(+)</text>
        <dbReference type="Rhea" id="RHEA:46608"/>
        <dbReference type="Rhea" id="RHEA-COMP:11060"/>
        <dbReference type="Rhea" id="RHEA-COMP:11605"/>
        <dbReference type="ChEBI" id="CHEBI:15378"/>
        <dbReference type="ChEBI" id="CHEBI:30013"/>
        <dbReference type="ChEBI" id="CHEBI:30616"/>
        <dbReference type="ChEBI" id="CHEBI:61977"/>
        <dbReference type="ChEBI" id="CHEBI:456216"/>
        <dbReference type="EC" id="2.7.11.11"/>
    </reaction>
</comment>
<comment type="similarity">
    <text evidence="4">Belongs to the protein kinase superfamily. AGC Ser/Thr protein kinase family. cAMP subfamily.</text>
</comment>
<dbReference type="EC" id="2.7.11.11"/>
<dbReference type="EMBL" id="AL590447">
    <property type="protein sequence ID" value="CAD25584.1"/>
    <property type="molecule type" value="Genomic_DNA"/>
</dbReference>
<dbReference type="RefSeq" id="NP_585980.1">
    <property type="nucleotide sequence ID" value="NM_001041602.1"/>
</dbReference>
<dbReference type="SMR" id="Q8SRK8"/>
<dbReference type="FunCoup" id="Q8SRK8">
    <property type="interactions" value="108"/>
</dbReference>
<dbReference type="STRING" id="284813.Q8SRK8"/>
<dbReference type="GeneID" id="859409"/>
<dbReference type="KEGG" id="ecu:ECU07_0520"/>
<dbReference type="VEuPathDB" id="MicrosporidiaDB:ECU07_0520"/>
<dbReference type="HOGENOM" id="CLU_000288_63_5_1"/>
<dbReference type="InParanoid" id="Q8SRK8"/>
<dbReference type="OMA" id="ELFFCKY"/>
<dbReference type="OrthoDB" id="63267at2759"/>
<dbReference type="Proteomes" id="UP000000819">
    <property type="component" value="Chromosome VII"/>
</dbReference>
<dbReference type="GO" id="GO:0005952">
    <property type="term" value="C:cAMP-dependent protein kinase complex"/>
    <property type="evidence" value="ECO:0007669"/>
    <property type="project" value="TreeGrafter"/>
</dbReference>
<dbReference type="GO" id="GO:0005524">
    <property type="term" value="F:ATP binding"/>
    <property type="evidence" value="ECO:0007669"/>
    <property type="project" value="UniProtKB-KW"/>
</dbReference>
<dbReference type="GO" id="GO:0004691">
    <property type="term" value="F:cAMP-dependent protein kinase activity"/>
    <property type="evidence" value="ECO:0007669"/>
    <property type="project" value="UniProtKB-EC"/>
</dbReference>
<dbReference type="GO" id="GO:0106310">
    <property type="term" value="F:protein serine kinase activity"/>
    <property type="evidence" value="ECO:0007669"/>
    <property type="project" value="RHEA"/>
</dbReference>
<dbReference type="CDD" id="cd05123">
    <property type="entry name" value="STKc_AGC"/>
    <property type="match status" value="1"/>
</dbReference>
<dbReference type="FunFam" id="1.10.510.10:FF:000008">
    <property type="entry name" value="Non-specific serine/threonine protein kinase"/>
    <property type="match status" value="1"/>
</dbReference>
<dbReference type="Gene3D" id="3.30.200.20">
    <property type="entry name" value="Phosphorylase Kinase, domain 1"/>
    <property type="match status" value="1"/>
</dbReference>
<dbReference type="Gene3D" id="1.10.510.10">
    <property type="entry name" value="Transferase(Phosphotransferase) domain 1"/>
    <property type="match status" value="1"/>
</dbReference>
<dbReference type="InterPro" id="IPR000961">
    <property type="entry name" value="AGC-kinase_C"/>
</dbReference>
<dbReference type="InterPro" id="IPR011009">
    <property type="entry name" value="Kinase-like_dom_sf"/>
</dbReference>
<dbReference type="InterPro" id="IPR000719">
    <property type="entry name" value="Prot_kinase_dom"/>
</dbReference>
<dbReference type="InterPro" id="IPR017441">
    <property type="entry name" value="Protein_kinase_ATP_BS"/>
</dbReference>
<dbReference type="InterPro" id="IPR008271">
    <property type="entry name" value="Ser/Thr_kinase_AS"/>
</dbReference>
<dbReference type="InterPro" id="IPR045270">
    <property type="entry name" value="STKc_AGC"/>
</dbReference>
<dbReference type="PANTHER" id="PTHR24353:SF37">
    <property type="entry name" value="CAMP-DEPENDENT PROTEIN KINASE CATALYTIC SUBUNIT PRKX"/>
    <property type="match status" value="1"/>
</dbReference>
<dbReference type="PANTHER" id="PTHR24353">
    <property type="entry name" value="CYCLIC NUCLEOTIDE-DEPENDENT PROTEIN KINASE"/>
    <property type="match status" value="1"/>
</dbReference>
<dbReference type="Pfam" id="PF00069">
    <property type="entry name" value="Pkinase"/>
    <property type="match status" value="1"/>
</dbReference>
<dbReference type="SMART" id="SM00220">
    <property type="entry name" value="S_TKc"/>
    <property type="match status" value="1"/>
</dbReference>
<dbReference type="SUPFAM" id="SSF56112">
    <property type="entry name" value="Protein kinase-like (PK-like)"/>
    <property type="match status" value="1"/>
</dbReference>
<dbReference type="PROSITE" id="PS51285">
    <property type="entry name" value="AGC_KINASE_CTER"/>
    <property type="match status" value="1"/>
</dbReference>
<dbReference type="PROSITE" id="PS00107">
    <property type="entry name" value="PROTEIN_KINASE_ATP"/>
    <property type="match status" value="1"/>
</dbReference>
<dbReference type="PROSITE" id="PS50011">
    <property type="entry name" value="PROTEIN_KINASE_DOM"/>
    <property type="match status" value="1"/>
</dbReference>
<dbReference type="PROSITE" id="PS00108">
    <property type="entry name" value="PROTEIN_KINASE_ST"/>
    <property type="match status" value="1"/>
</dbReference>
<organism>
    <name type="scientific">Encephalitozoon cuniculi (strain GB-M1)</name>
    <name type="common">Microsporidian parasite</name>
    <dbReference type="NCBI Taxonomy" id="284813"/>
    <lineage>
        <taxon>Eukaryota</taxon>
        <taxon>Fungi</taxon>
        <taxon>Fungi incertae sedis</taxon>
        <taxon>Microsporidia</taxon>
        <taxon>Unikaryonidae</taxon>
        <taxon>Encephalitozoon</taxon>
    </lineage>
</organism>
<gene>
    <name type="ordered locus">ECU07_0520</name>
</gene>
<reference key="1">
    <citation type="journal article" date="2001" name="Nature">
        <title>Genome sequence and gene compaction of the eukaryote parasite Encephalitozoon cuniculi.</title>
        <authorList>
            <person name="Katinka M.D."/>
            <person name="Duprat S."/>
            <person name="Cornillot E."/>
            <person name="Metenier G."/>
            <person name="Thomarat F."/>
            <person name="Prensier G."/>
            <person name="Barbe V."/>
            <person name="Peyretaillade E."/>
            <person name="Brottier P."/>
            <person name="Wincker P."/>
            <person name="Delbac F."/>
            <person name="El Alaoui H."/>
            <person name="Peyret P."/>
            <person name="Saurin W."/>
            <person name="Gouy M."/>
            <person name="Weissenbach J."/>
            <person name="Vivares C.P."/>
        </authorList>
    </citation>
    <scope>NUCLEOTIDE SEQUENCE [LARGE SCALE GENOMIC DNA]</scope>
    <source>
        <strain>GB-M1</strain>
    </source>
</reference>
<accession>Q8SRK8</accession>
<feature type="chain" id="PRO_0000086070" description="Probable cAMP-dependent protein kinase catalytic subunit">
    <location>
        <begin position="1"/>
        <end position="322"/>
    </location>
</feature>
<feature type="domain" description="Protein kinase" evidence="1">
    <location>
        <begin position="7"/>
        <end position="261"/>
    </location>
</feature>
<feature type="domain" description="AGC-kinase C-terminal" evidence="2">
    <location>
        <begin position="262"/>
        <end position="322"/>
    </location>
</feature>
<feature type="active site" description="Proton acceptor" evidence="1 3">
    <location>
        <position position="132"/>
    </location>
</feature>
<feature type="binding site" evidence="1">
    <location>
        <begin position="13"/>
        <end position="21"/>
    </location>
    <ligand>
        <name>ATP</name>
        <dbReference type="ChEBI" id="CHEBI:30616"/>
    </ligand>
</feature>
<feature type="binding site" evidence="1">
    <location>
        <position position="37"/>
    </location>
    <ligand>
        <name>ATP</name>
        <dbReference type="ChEBI" id="CHEBI:30616"/>
    </ligand>
</feature>
<evidence type="ECO:0000255" key="1">
    <source>
        <dbReference type="PROSITE-ProRule" id="PRU00159"/>
    </source>
</evidence>
<evidence type="ECO:0000255" key="2">
    <source>
        <dbReference type="PROSITE-ProRule" id="PRU00618"/>
    </source>
</evidence>
<evidence type="ECO:0000255" key="3">
    <source>
        <dbReference type="PROSITE-ProRule" id="PRU10027"/>
    </source>
</evidence>
<evidence type="ECO:0000305" key="4"/>